<name>KITH_VAR67</name>
<proteinExistence type="inferred from homology"/>
<sequence length="177" mass="20055">MNGGHIQLIIGPMFSGKSTELIRRVRRYQIAQYKCVTIKYSNDNRYGTGLWTHDKNNFEALEATKLCDVLEAITDFSVIGIDEGQFFPDIVEFCERMANEGKIVIVAALDGTFQRKPFNNILDLIPLSEMVVKLTAVCMKCFKEASFSKRLGTETKIEIIGGIDMYQSVCRKCYIDS</sequence>
<protein>
    <recommendedName>
        <fullName>Thymidine kinase</fullName>
        <ecNumber>2.7.1.21</ecNumber>
    </recommendedName>
</protein>
<gene>
    <name type="primary">OPG101</name>
    <name type="synonym">TK</name>
    <name type="ORF">J2R</name>
    <name type="ORF">L2R</name>
    <name type="ORF">M2R</name>
</gene>
<comment type="function">
    <text evidence="2">Phosphorylates thymidine and thymidine analogs, such as azidothymidine (AZT). Part of the salvage pathway for pyrimidine deoxyribonucleotide synthesis.</text>
</comment>
<comment type="catalytic activity">
    <reaction evidence="2">
        <text>thymidine + ATP = dTMP + ADP + H(+)</text>
        <dbReference type="Rhea" id="RHEA:19129"/>
        <dbReference type="ChEBI" id="CHEBI:15378"/>
        <dbReference type="ChEBI" id="CHEBI:17748"/>
        <dbReference type="ChEBI" id="CHEBI:30616"/>
        <dbReference type="ChEBI" id="CHEBI:63528"/>
        <dbReference type="ChEBI" id="CHEBI:456216"/>
        <dbReference type="EC" id="2.7.1.21"/>
    </reaction>
</comment>
<comment type="subunit">
    <text evidence="1">Homotetramer. Two molecules of substrate bind to each enzyme tetramer.</text>
</comment>
<comment type="similarity">
    <text evidence="3">Belongs to the thymidine kinase family.</text>
</comment>
<dbReference type="EC" id="2.7.1.21"/>
<dbReference type="EMBL" id="X67119">
    <property type="protein sequence ID" value="CAA47578.1"/>
    <property type="molecule type" value="Genomic_DNA"/>
</dbReference>
<dbReference type="EMBL" id="X69198">
    <property type="protein sequence ID" value="CAA49020.1"/>
    <property type="molecule type" value="Genomic_DNA"/>
</dbReference>
<dbReference type="EMBL" id="S55844">
    <property type="protein sequence ID" value="AAB24675.1"/>
    <property type="molecule type" value="Genomic_DNA"/>
</dbReference>
<dbReference type="PIR" id="A00611">
    <property type="entry name" value="KIVZVV"/>
</dbReference>
<dbReference type="RefSeq" id="NP_042123.1">
    <property type="nucleotide sequence ID" value="NC_001611.1"/>
</dbReference>
<dbReference type="SMR" id="P0DOM7"/>
<dbReference type="GeneID" id="1486465"/>
<dbReference type="KEGG" id="vg:1486465"/>
<dbReference type="Proteomes" id="UP000002060">
    <property type="component" value="Segment"/>
</dbReference>
<dbReference type="GO" id="GO:0005524">
    <property type="term" value="F:ATP binding"/>
    <property type="evidence" value="ECO:0007669"/>
    <property type="project" value="UniProtKB-KW"/>
</dbReference>
<dbReference type="GO" id="GO:0046872">
    <property type="term" value="F:metal ion binding"/>
    <property type="evidence" value="ECO:0007669"/>
    <property type="project" value="UniProtKB-KW"/>
</dbReference>
<dbReference type="GO" id="GO:0004797">
    <property type="term" value="F:thymidine kinase activity"/>
    <property type="evidence" value="ECO:0007669"/>
    <property type="project" value="UniProtKB-EC"/>
</dbReference>
<dbReference type="GO" id="GO:0071897">
    <property type="term" value="P:DNA biosynthetic process"/>
    <property type="evidence" value="ECO:0007669"/>
    <property type="project" value="UniProtKB-KW"/>
</dbReference>
<dbReference type="GO" id="GO:0046104">
    <property type="term" value="P:thymidine metabolic process"/>
    <property type="evidence" value="ECO:0007669"/>
    <property type="project" value="TreeGrafter"/>
</dbReference>
<dbReference type="FunFam" id="3.30.60.20:FF:000028">
    <property type="entry name" value="Thymidine kinase"/>
    <property type="match status" value="1"/>
</dbReference>
<dbReference type="FunFam" id="3.40.50.300:FF:000761">
    <property type="entry name" value="Thymidine kinase"/>
    <property type="match status" value="1"/>
</dbReference>
<dbReference type="Gene3D" id="3.30.60.20">
    <property type="match status" value="1"/>
</dbReference>
<dbReference type="Gene3D" id="3.40.50.300">
    <property type="entry name" value="P-loop containing nucleotide triphosphate hydrolases"/>
    <property type="match status" value="1"/>
</dbReference>
<dbReference type="InterPro" id="IPR027417">
    <property type="entry name" value="P-loop_NTPase"/>
</dbReference>
<dbReference type="InterPro" id="IPR001267">
    <property type="entry name" value="Thymidine_kinase"/>
</dbReference>
<dbReference type="InterPro" id="IPR020633">
    <property type="entry name" value="Thymidine_kinase_CS"/>
</dbReference>
<dbReference type="PANTHER" id="PTHR11441">
    <property type="entry name" value="THYMIDINE KINASE"/>
    <property type="match status" value="1"/>
</dbReference>
<dbReference type="PANTHER" id="PTHR11441:SF0">
    <property type="entry name" value="THYMIDINE KINASE, CYTOSOLIC"/>
    <property type="match status" value="1"/>
</dbReference>
<dbReference type="Pfam" id="PF00265">
    <property type="entry name" value="TK"/>
    <property type="match status" value="1"/>
</dbReference>
<dbReference type="PIRSF" id="PIRSF035805">
    <property type="entry name" value="TK_cell"/>
    <property type="match status" value="1"/>
</dbReference>
<dbReference type="SUPFAM" id="SSF57716">
    <property type="entry name" value="Glucocorticoid receptor-like (DNA-binding domain)"/>
    <property type="match status" value="1"/>
</dbReference>
<dbReference type="SUPFAM" id="SSF52540">
    <property type="entry name" value="P-loop containing nucleoside triphosphate hydrolases"/>
    <property type="match status" value="1"/>
</dbReference>
<dbReference type="PROSITE" id="PS00603">
    <property type="entry name" value="TK_CELLULAR_TYPE"/>
    <property type="match status" value="1"/>
</dbReference>
<organism>
    <name type="scientific">Variola virus (isolate Human/India/Ind3/1967)</name>
    <name type="common">VARV</name>
    <name type="synonym">Smallpox virus</name>
    <dbReference type="NCBI Taxonomy" id="587200"/>
    <lineage>
        <taxon>Viruses</taxon>
        <taxon>Varidnaviria</taxon>
        <taxon>Bamfordvirae</taxon>
        <taxon>Nucleocytoviricota</taxon>
        <taxon>Pokkesviricetes</taxon>
        <taxon>Chitovirales</taxon>
        <taxon>Poxviridae</taxon>
        <taxon>Chordopoxvirinae</taxon>
        <taxon>Orthopoxvirus</taxon>
        <taxon>Variola virus</taxon>
    </lineage>
</organism>
<evidence type="ECO:0000250" key="1"/>
<evidence type="ECO:0000250" key="2">
    <source>
        <dbReference type="UniProtKB" id="O57203"/>
    </source>
</evidence>
<evidence type="ECO:0000305" key="3"/>
<keyword id="KW-0067">ATP-binding</keyword>
<keyword id="KW-1015">Disulfide bond</keyword>
<keyword id="KW-0237">DNA synthesis</keyword>
<keyword id="KW-0418">Kinase</keyword>
<keyword id="KW-0479">Metal-binding</keyword>
<keyword id="KW-0547">Nucleotide-binding</keyword>
<keyword id="KW-1185">Reference proteome</keyword>
<keyword id="KW-0808">Transferase</keyword>
<keyword id="KW-0862">Zinc</keyword>
<organismHost>
    <name type="scientific">Homo sapiens</name>
    <name type="common">Human</name>
    <dbReference type="NCBI Taxonomy" id="9606"/>
</organismHost>
<feature type="chain" id="PRO_0000174941" description="Thymidine kinase">
    <location>
        <begin position="1"/>
        <end position="177"/>
    </location>
</feature>
<feature type="active site" description="Proton acceptor" evidence="2">
    <location>
        <position position="83"/>
    </location>
</feature>
<feature type="binding site" evidence="2">
    <location>
        <begin position="11"/>
        <end position="18"/>
    </location>
    <ligand>
        <name>ATP</name>
        <dbReference type="ChEBI" id="CHEBI:30616"/>
    </ligand>
</feature>
<feature type="binding site" evidence="2">
    <location>
        <position position="113"/>
    </location>
    <ligand>
        <name>substrate</name>
    </ligand>
</feature>
<feature type="binding site" evidence="2">
    <location>
        <position position="138"/>
    </location>
    <ligand>
        <name>Zn(2+)</name>
        <dbReference type="ChEBI" id="CHEBI:29105"/>
    </ligand>
</feature>
<feature type="binding site" evidence="2">
    <location>
        <position position="141"/>
    </location>
    <ligand>
        <name>Zn(2+)</name>
        <dbReference type="ChEBI" id="CHEBI:29105"/>
    </ligand>
</feature>
<feature type="binding site" evidence="2">
    <location>
        <begin position="157"/>
        <end position="161"/>
    </location>
    <ligand>
        <name>substrate</name>
    </ligand>
</feature>
<feature type="binding site" evidence="2">
    <location>
        <position position="170"/>
    </location>
    <ligand>
        <name>Zn(2+)</name>
        <dbReference type="ChEBI" id="CHEBI:29105"/>
    </ligand>
</feature>
<feature type="binding site" evidence="2">
    <location>
        <position position="173"/>
    </location>
    <ligand>
        <name>Zn(2+)</name>
        <dbReference type="ChEBI" id="CHEBI:29105"/>
    </ligand>
</feature>
<feature type="disulfide bond" description="Interchain (with C-173)" evidence="2">
    <location>
        <position position="170"/>
    </location>
</feature>
<feature type="disulfide bond" description="Interchain (with C-170)" evidence="2">
    <location>
        <position position="173"/>
    </location>
</feature>
<reference key="1">
    <citation type="journal article" date="1993" name="Virus Res.">
        <title>Nucleotide sequence analysis of variola virus HindIII M, L, I genome fragments.</title>
        <authorList>
            <person name="Shchelkunov S.N."/>
            <person name="Blinov V.M."/>
            <person name="Totmenin A.V."/>
            <person name="Marennikova S.S."/>
            <person name="Kolykhalov A.A."/>
            <person name="Frolov I.V."/>
            <person name="Chizhikov V.E."/>
            <person name="Gytorov V.V."/>
            <person name="Gashikov P.V."/>
            <person name="Belanov E.F."/>
            <person name="Belavin P.A."/>
            <person name="Resenchuk S.M."/>
            <person name="Andzhaparidze O.G."/>
            <person name="Sandakhchiev L.S."/>
        </authorList>
    </citation>
    <scope>NUCLEOTIDE SEQUENCE [GENOMIC DNA]</scope>
</reference>
<reference key="2">
    <citation type="journal article" date="1993" name="FEBS Lett.">
        <title>Genes of variola and vaccinia viruses necessary to overcome the host protective mechanisms.</title>
        <authorList>
            <person name="Shchelkunov S.N."/>
            <person name="Blinov V.M."/>
            <person name="Sandakhchiev L.S."/>
        </authorList>
    </citation>
    <scope>NUCLEOTIDE SEQUENCE [LARGE SCALE GENOMIC DNA]</scope>
</reference>
<accession>P0DOM7</accession>
<accession>P04364</accession>
<accession>Q9QNJ1</accession>